<organism>
    <name type="scientific">Mus musculus</name>
    <name type="common">Mouse</name>
    <dbReference type="NCBI Taxonomy" id="10090"/>
    <lineage>
        <taxon>Eukaryota</taxon>
        <taxon>Metazoa</taxon>
        <taxon>Chordata</taxon>
        <taxon>Craniata</taxon>
        <taxon>Vertebrata</taxon>
        <taxon>Euteleostomi</taxon>
        <taxon>Mammalia</taxon>
        <taxon>Eutheria</taxon>
        <taxon>Euarchontoglires</taxon>
        <taxon>Glires</taxon>
        <taxon>Rodentia</taxon>
        <taxon>Myomorpha</taxon>
        <taxon>Muroidea</taxon>
        <taxon>Muridae</taxon>
        <taxon>Murinae</taxon>
        <taxon>Mus</taxon>
        <taxon>Mus</taxon>
    </lineage>
</organism>
<proteinExistence type="evidence at transcript level"/>
<feature type="chain" id="PRO_0000274283" description="E3 ubiquitin-protein ligase MARCHF9">
    <location>
        <begin position="1"/>
        <end position="348"/>
    </location>
</feature>
<feature type="transmembrane region" description="Helical" evidence="2">
    <location>
        <begin position="185"/>
        <end position="205"/>
    </location>
</feature>
<feature type="transmembrane region" description="Helical" evidence="2">
    <location>
        <begin position="219"/>
        <end position="239"/>
    </location>
</feature>
<feature type="zinc finger region" description="RING-CH-type" evidence="3">
    <location>
        <begin position="102"/>
        <end position="162"/>
    </location>
</feature>
<feature type="region of interest" description="Disordered" evidence="4">
    <location>
        <begin position="48"/>
        <end position="96"/>
    </location>
</feature>
<feature type="region of interest" description="Disordered" evidence="4">
    <location>
        <begin position="272"/>
        <end position="304"/>
    </location>
</feature>
<feature type="region of interest" description="Disordered" evidence="4">
    <location>
        <begin position="328"/>
        <end position="348"/>
    </location>
</feature>
<feature type="compositionally biased region" description="Basic and acidic residues" evidence="4">
    <location>
        <begin position="63"/>
        <end position="75"/>
    </location>
</feature>
<feature type="compositionally biased region" description="Pro residues" evidence="4">
    <location>
        <begin position="76"/>
        <end position="90"/>
    </location>
</feature>
<feature type="binding site" evidence="3">
    <location>
        <position position="110"/>
    </location>
    <ligand>
        <name>Zn(2+)</name>
        <dbReference type="ChEBI" id="CHEBI:29105"/>
        <label>1</label>
    </ligand>
</feature>
<feature type="binding site" evidence="3">
    <location>
        <position position="113"/>
    </location>
    <ligand>
        <name>Zn(2+)</name>
        <dbReference type="ChEBI" id="CHEBI:29105"/>
        <label>1</label>
    </ligand>
</feature>
<feature type="binding site" evidence="3">
    <location>
        <position position="126"/>
    </location>
    <ligand>
        <name>Zn(2+)</name>
        <dbReference type="ChEBI" id="CHEBI:29105"/>
        <label>2</label>
    </ligand>
</feature>
<feature type="binding site" evidence="3">
    <location>
        <position position="128"/>
    </location>
    <ligand>
        <name>Zn(2+)</name>
        <dbReference type="ChEBI" id="CHEBI:29105"/>
        <label>2</label>
    </ligand>
</feature>
<feature type="binding site" evidence="3">
    <location>
        <position position="136"/>
    </location>
    <ligand>
        <name>Zn(2+)</name>
        <dbReference type="ChEBI" id="CHEBI:29105"/>
        <label>1</label>
    </ligand>
</feature>
<feature type="binding site" evidence="3">
    <location>
        <position position="139"/>
    </location>
    <ligand>
        <name>Zn(2+)</name>
        <dbReference type="ChEBI" id="CHEBI:29105"/>
        <label>1</label>
    </ligand>
</feature>
<feature type="binding site" evidence="3">
    <location>
        <position position="152"/>
    </location>
    <ligand>
        <name>Zn(2+)</name>
        <dbReference type="ChEBI" id="CHEBI:29105"/>
        <label>2</label>
    </ligand>
</feature>
<feature type="binding site" evidence="3">
    <location>
        <position position="155"/>
    </location>
    <ligand>
        <name>Zn(2+)</name>
        <dbReference type="ChEBI" id="CHEBI:29105"/>
        <label>2</label>
    </ligand>
</feature>
<sequence>MLKSRLRMFLNELKLLVLTGGGRPRAEPQPRGGGGGGCGWAPFAGCSARDGDGDEEEYYGSEPRARGLAGDKEPRAGPPPPPAPPPPPPGALDALSLSSSLDSGLRTPQCRICFQGPEQGELLSPCRCDGSVRCTHQPCLIRWISERGSWSCELCYFKYQVLAISTKNPLQWQAISLTVIEKVQIAAIVLGSLFLVASISWLIWSSLSPSAKWQRQDLLFQICYGMYGFMDVVCIGLIVHEGSSVYRIFKRWQAVNQQWKVLNYDKTKDVGGDTGGGAAGKPGPRTSRTSPPAGAPTRPPAAQRMRMRTLLPQRCGYTILHLLGQLRPPDARSSSHSGREVVMRVTTV</sequence>
<keyword id="KW-0333">Golgi apparatus</keyword>
<keyword id="KW-0458">Lysosome</keyword>
<keyword id="KW-0472">Membrane</keyword>
<keyword id="KW-0479">Metal-binding</keyword>
<keyword id="KW-1185">Reference proteome</keyword>
<keyword id="KW-0808">Transferase</keyword>
<keyword id="KW-0812">Transmembrane</keyword>
<keyword id="KW-1133">Transmembrane helix</keyword>
<keyword id="KW-0833">Ubl conjugation pathway</keyword>
<keyword id="KW-0862">Zinc</keyword>
<keyword id="KW-0863">Zinc-finger</keyword>
<name>MARH9_MOUSE</name>
<dbReference type="EC" id="2.3.2.27"/>
<dbReference type="EMBL" id="AK158026">
    <property type="protein sequence ID" value="BAE34323.1"/>
    <property type="molecule type" value="mRNA"/>
</dbReference>
<dbReference type="EMBL" id="BC019560">
    <property type="protein sequence ID" value="AAH19560.1"/>
    <property type="status" value="ALT_INIT"/>
    <property type="molecule type" value="mRNA"/>
</dbReference>
<dbReference type="CCDS" id="CCDS24225.1"/>
<dbReference type="RefSeq" id="NP_001028434.1">
    <property type="nucleotide sequence ID" value="NM_001033262.2"/>
</dbReference>
<dbReference type="SMR" id="Q3TZ87"/>
<dbReference type="FunCoup" id="Q3TZ87">
    <property type="interactions" value="266"/>
</dbReference>
<dbReference type="STRING" id="10090.ENSMUSP00000041581"/>
<dbReference type="PhosphoSitePlus" id="Q3TZ87"/>
<dbReference type="PaxDb" id="10090-ENSMUSP00000041581"/>
<dbReference type="ProteomicsDB" id="295829"/>
<dbReference type="Antibodypedia" id="28932">
    <property type="antibodies" value="156 antibodies from 21 providers"/>
</dbReference>
<dbReference type="Ensembl" id="ENSMUST00000040307.6">
    <property type="protein sequence ID" value="ENSMUSP00000041581.6"/>
    <property type="gene ID" value="ENSMUSG00000040502.6"/>
</dbReference>
<dbReference type="GeneID" id="216438"/>
<dbReference type="KEGG" id="mmu:216438"/>
<dbReference type="UCSC" id="uc007hhu.1">
    <property type="organism name" value="mouse"/>
</dbReference>
<dbReference type="AGR" id="MGI:2446144"/>
<dbReference type="CTD" id="92979"/>
<dbReference type="MGI" id="MGI:2446144">
    <property type="gene designation" value="Marchf9"/>
</dbReference>
<dbReference type="VEuPathDB" id="HostDB:ENSMUSG00000040502"/>
<dbReference type="eggNOG" id="KOG1609">
    <property type="taxonomic scope" value="Eukaryota"/>
</dbReference>
<dbReference type="GeneTree" id="ENSGT00940000158208"/>
<dbReference type="HOGENOM" id="CLU_045217_0_0_1"/>
<dbReference type="InParanoid" id="Q3TZ87"/>
<dbReference type="OMA" id="PNMFKYR"/>
<dbReference type="OrthoDB" id="264354at2759"/>
<dbReference type="PhylomeDB" id="Q3TZ87"/>
<dbReference type="TreeFam" id="TF319557"/>
<dbReference type="UniPathway" id="UPA00143"/>
<dbReference type="BioGRID-ORCS" id="216438">
    <property type="hits" value="0 hits in 46 CRISPR screens"/>
</dbReference>
<dbReference type="PRO" id="PR:Q3TZ87"/>
<dbReference type="Proteomes" id="UP000000589">
    <property type="component" value="Chromosome 10"/>
</dbReference>
<dbReference type="RNAct" id="Q3TZ87">
    <property type="molecule type" value="protein"/>
</dbReference>
<dbReference type="Bgee" id="ENSMUSG00000040502">
    <property type="expression patterns" value="Expressed in cortical plate and 164 other cell types or tissues"/>
</dbReference>
<dbReference type="GO" id="GO:0000139">
    <property type="term" value="C:Golgi membrane"/>
    <property type="evidence" value="ECO:0007669"/>
    <property type="project" value="UniProtKB-SubCell"/>
</dbReference>
<dbReference type="GO" id="GO:0005795">
    <property type="term" value="C:Golgi stack"/>
    <property type="evidence" value="ECO:0000250"/>
    <property type="project" value="UniProtKB"/>
</dbReference>
<dbReference type="GO" id="GO:0005765">
    <property type="term" value="C:lysosomal membrane"/>
    <property type="evidence" value="ECO:0007669"/>
    <property type="project" value="UniProtKB-SubCell"/>
</dbReference>
<dbReference type="GO" id="GO:0005802">
    <property type="term" value="C:trans-Golgi network"/>
    <property type="evidence" value="ECO:0000250"/>
    <property type="project" value="UniProtKB"/>
</dbReference>
<dbReference type="GO" id="GO:0004842">
    <property type="term" value="F:ubiquitin-protein transferase activity"/>
    <property type="evidence" value="ECO:0007669"/>
    <property type="project" value="InterPro"/>
</dbReference>
<dbReference type="GO" id="GO:0008270">
    <property type="term" value="F:zinc ion binding"/>
    <property type="evidence" value="ECO:0007669"/>
    <property type="project" value="UniProtKB-KW"/>
</dbReference>
<dbReference type="GO" id="GO:0016567">
    <property type="term" value="P:protein ubiquitination"/>
    <property type="evidence" value="ECO:0007669"/>
    <property type="project" value="UniProtKB-UniPathway"/>
</dbReference>
<dbReference type="CDD" id="cd16811">
    <property type="entry name" value="RING_CH-C4HC3_MARCH4_9"/>
    <property type="match status" value="1"/>
</dbReference>
<dbReference type="FunFam" id="3.30.40.10:FF:000209">
    <property type="entry name" value="E3 ubiquitin-protein ligase MARCH4"/>
    <property type="match status" value="1"/>
</dbReference>
<dbReference type="Gene3D" id="3.30.40.10">
    <property type="entry name" value="Zinc/RING finger domain, C3HC4 (zinc finger)"/>
    <property type="match status" value="1"/>
</dbReference>
<dbReference type="InterPro" id="IPR046356">
    <property type="entry name" value="MARCHF4/9/11"/>
</dbReference>
<dbReference type="InterPro" id="IPR047904">
    <property type="entry name" value="MARCHF9_RING_CH-C4HC3"/>
</dbReference>
<dbReference type="InterPro" id="IPR011016">
    <property type="entry name" value="Znf_RING-CH"/>
</dbReference>
<dbReference type="InterPro" id="IPR013083">
    <property type="entry name" value="Znf_RING/FYVE/PHD"/>
</dbReference>
<dbReference type="PANTHER" id="PTHR46053">
    <property type="entry name" value="E3 UBIQUITIN-PROTEIN LIGASE MARCH4-LIKE"/>
    <property type="match status" value="1"/>
</dbReference>
<dbReference type="PANTHER" id="PTHR46053:SF4">
    <property type="entry name" value="E3 UBIQUITIN-PROTEIN LIGASE MARCHF9"/>
    <property type="match status" value="1"/>
</dbReference>
<dbReference type="Pfam" id="PF12906">
    <property type="entry name" value="RINGv"/>
    <property type="match status" value="1"/>
</dbReference>
<dbReference type="SMART" id="SM00744">
    <property type="entry name" value="RINGv"/>
    <property type="match status" value="1"/>
</dbReference>
<dbReference type="SUPFAM" id="SSF101447">
    <property type="entry name" value="Formin homology 2 domain (FH2 domain)"/>
    <property type="match status" value="1"/>
</dbReference>
<dbReference type="SUPFAM" id="SSF57850">
    <property type="entry name" value="RING/U-box"/>
    <property type="match status" value="1"/>
</dbReference>
<dbReference type="PROSITE" id="PS51292">
    <property type="entry name" value="ZF_RING_CH"/>
    <property type="match status" value="1"/>
</dbReference>
<comment type="function">
    <text evidence="1">E3 ubiquitin-protein ligase that may mediate ubiquitination of MHC-I, CD4 and ICAM1, and promote their subsequent endocytosis and sorting to lysosomes via multivesicular bodies. E3 ubiquitin ligases accept ubiquitin from an E2 ubiquitin-conjugating enzyme in the form of a thioester and then directly transfer the ubiquitin to targeted substrates.</text>
</comment>
<comment type="catalytic activity">
    <reaction>
        <text>S-ubiquitinyl-[E2 ubiquitin-conjugating enzyme]-L-cysteine + [acceptor protein]-L-lysine = [E2 ubiquitin-conjugating enzyme]-L-cysteine + N(6)-ubiquitinyl-[acceptor protein]-L-lysine.</text>
        <dbReference type="EC" id="2.3.2.27"/>
    </reaction>
</comment>
<comment type="pathway">
    <text>Protein modification; protein ubiquitination.</text>
</comment>
<comment type="subunit">
    <text evidence="1">Homodimer.</text>
</comment>
<comment type="subcellular location">
    <subcellularLocation>
        <location evidence="1">Golgi apparatus membrane</location>
        <topology evidence="2">Multi-pass membrane protein</topology>
    </subcellularLocation>
    <subcellularLocation>
        <location evidence="1">Lysosome membrane</location>
        <topology evidence="2">Multi-pass membrane protein</topology>
    </subcellularLocation>
</comment>
<comment type="domain">
    <text>The RING-CH-type zinc finger domain is required for E3 ligase activity.</text>
</comment>
<comment type="sequence caution" evidence="5">
    <conflict type="erroneous initiation">
        <sequence resource="EMBL-CDS" id="AAH19560"/>
    </conflict>
    <text>Extended N-terminus.</text>
</comment>
<gene>
    <name type="primary">Marchf9</name>
    <name type="synonym">March9</name>
</gene>
<evidence type="ECO:0000250" key="1">
    <source>
        <dbReference type="UniProtKB" id="Q86YJ5"/>
    </source>
</evidence>
<evidence type="ECO:0000255" key="2"/>
<evidence type="ECO:0000255" key="3">
    <source>
        <dbReference type="PROSITE-ProRule" id="PRU00623"/>
    </source>
</evidence>
<evidence type="ECO:0000256" key="4">
    <source>
        <dbReference type="SAM" id="MobiDB-lite"/>
    </source>
</evidence>
<evidence type="ECO:0000305" key="5"/>
<protein>
    <recommendedName>
        <fullName>E3 ubiquitin-protein ligase MARCHF9</fullName>
        <ecNumber>2.3.2.27</ecNumber>
    </recommendedName>
    <alternativeName>
        <fullName>Membrane-associated RING finger protein 9</fullName>
    </alternativeName>
    <alternativeName>
        <fullName>Membrane-associated RING-CH protein IX</fullName>
        <shortName>MARCH-IX</shortName>
    </alternativeName>
    <alternativeName>
        <fullName evidence="5">RING-type E3 ubiquitin transferase MARCHF9</fullName>
    </alternativeName>
</protein>
<accession>Q3TZ87</accession>
<accession>Q8VCL1</accession>
<reference key="1">
    <citation type="journal article" date="2005" name="Science">
        <title>The transcriptional landscape of the mammalian genome.</title>
        <authorList>
            <person name="Carninci P."/>
            <person name="Kasukawa T."/>
            <person name="Katayama S."/>
            <person name="Gough J."/>
            <person name="Frith M.C."/>
            <person name="Maeda N."/>
            <person name="Oyama R."/>
            <person name="Ravasi T."/>
            <person name="Lenhard B."/>
            <person name="Wells C."/>
            <person name="Kodzius R."/>
            <person name="Shimokawa K."/>
            <person name="Bajic V.B."/>
            <person name="Brenner S.E."/>
            <person name="Batalov S."/>
            <person name="Forrest A.R."/>
            <person name="Zavolan M."/>
            <person name="Davis M.J."/>
            <person name="Wilming L.G."/>
            <person name="Aidinis V."/>
            <person name="Allen J.E."/>
            <person name="Ambesi-Impiombato A."/>
            <person name="Apweiler R."/>
            <person name="Aturaliya R.N."/>
            <person name="Bailey T.L."/>
            <person name="Bansal M."/>
            <person name="Baxter L."/>
            <person name="Beisel K.W."/>
            <person name="Bersano T."/>
            <person name="Bono H."/>
            <person name="Chalk A.M."/>
            <person name="Chiu K.P."/>
            <person name="Choudhary V."/>
            <person name="Christoffels A."/>
            <person name="Clutterbuck D.R."/>
            <person name="Crowe M.L."/>
            <person name="Dalla E."/>
            <person name="Dalrymple B.P."/>
            <person name="de Bono B."/>
            <person name="Della Gatta G."/>
            <person name="di Bernardo D."/>
            <person name="Down T."/>
            <person name="Engstrom P."/>
            <person name="Fagiolini M."/>
            <person name="Faulkner G."/>
            <person name="Fletcher C.F."/>
            <person name="Fukushima T."/>
            <person name="Furuno M."/>
            <person name="Futaki S."/>
            <person name="Gariboldi M."/>
            <person name="Georgii-Hemming P."/>
            <person name="Gingeras T.R."/>
            <person name="Gojobori T."/>
            <person name="Green R.E."/>
            <person name="Gustincich S."/>
            <person name="Harbers M."/>
            <person name="Hayashi Y."/>
            <person name="Hensch T.K."/>
            <person name="Hirokawa N."/>
            <person name="Hill D."/>
            <person name="Huminiecki L."/>
            <person name="Iacono M."/>
            <person name="Ikeo K."/>
            <person name="Iwama A."/>
            <person name="Ishikawa T."/>
            <person name="Jakt M."/>
            <person name="Kanapin A."/>
            <person name="Katoh M."/>
            <person name="Kawasawa Y."/>
            <person name="Kelso J."/>
            <person name="Kitamura H."/>
            <person name="Kitano H."/>
            <person name="Kollias G."/>
            <person name="Krishnan S.P."/>
            <person name="Kruger A."/>
            <person name="Kummerfeld S.K."/>
            <person name="Kurochkin I.V."/>
            <person name="Lareau L.F."/>
            <person name="Lazarevic D."/>
            <person name="Lipovich L."/>
            <person name="Liu J."/>
            <person name="Liuni S."/>
            <person name="McWilliam S."/>
            <person name="Madan Babu M."/>
            <person name="Madera M."/>
            <person name="Marchionni L."/>
            <person name="Matsuda H."/>
            <person name="Matsuzawa S."/>
            <person name="Miki H."/>
            <person name="Mignone F."/>
            <person name="Miyake S."/>
            <person name="Morris K."/>
            <person name="Mottagui-Tabar S."/>
            <person name="Mulder N."/>
            <person name="Nakano N."/>
            <person name="Nakauchi H."/>
            <person name="Ng P."/>
            <person name="Nilsson R."/>
            <person name="Nishiguchi S."/>
            <person name="Nishikawa S."/>
            <person name="Nori F."/>
            <person name="Ohara O."/>
            <person name="Okazaki Y."/>
            <person name="Orlando V."/>
            <person name="Pang K.C."/>
            <person name="Pavan W.J."/>
            <person name="Pavesi G."/>
            <person name="Pesole G."/>
            <person name="Petrovsky N."/>
            <person name="Piazza S."/>
            <person name="Reed J."/>
            <person name="Reid J.F."/>
            <person name="Ring B.Z."/>
            <person name="Ringwald M."/>
            <person name="Rost B."/>
            <person name="Ruan Y."/>
            <person name="Salzberg S.L."/>
            <person name="Sandelin A."/>
            <person name="Schneider C."/>
            <person name="Schoenbach C."/>
            <person name="Sekiguchi K."/>
            <person name="Semple C.A."/>
            <person name="Seno S."/>
            <person name="Sessa L."/>
            <person name="Sheng Y."/>
            <person name="Shibata Y."/>
            <person name="Shimada H."/>
            <person name="Shimada K."/>
            <person name="Silva D."/>
            <person name="Sinclair B."/>
            <person name="Sperling S."/>
            <person name="Stupka E."/>
            <person name="Sugiura K."/>
            <person name="Sultana R."/>
            <person name="Takenaka Y."/>
            <person name="Taki K."/>
            <person name="Tammoja K."/>
            <person name="Tan S.L."/>
            <person name="Tang S."/>
            <person name="Taylor M.S."/>
            <person name="Tegner J."/>
            <person name="Teichmann S.A."/>
            <person name="Ueda H.R."/>
            <person name="van Nimwegen E."/>
            <person name="Verardo R."/>
            <person name="Wei C.L."/>
            <person name="Yagi K."/>
            <person name="Yamanishi H."/>
            <person name="Zabarovsky E."/>
            <person name="Zhu S."/>
            <person name="Zimmer A."/>
            <person name="Hide W."/>
            <person name="Bult C."/>
            <person name="Grimmond S.M."/>
            <person name="Teasdale R.D."/>
            <person name="Liu E.T."/>
            <person name="Brusic V."/>
            <person name="Quackenbush J."/>
            <person name="Wahlestedt C."/>
            <person name="Mattick J.S."/>
            <person name="Hume D.A."/>
            <person name="Kai C."/>
            <person name="Sasaki D."/>
            <person name="Tomaru Y."/>
            <person name="Fukuda S."/>
            <person name="Kanamori-Katayama M."/>
            <person name="Suzuki M."/>
            <person name="Aoki J."/>
            <person name="Arakawa T."/>
            <person name="Iida J."/>
            <person name="Imamura K."/>
            <person name="Itoh M."/>
            <person name="Kato T."/>
            <person name="Kawaji H."/>
            <person name="Kawagashira N."/>
            <person name="Kawashima T."/>
            <person name="Kojima M."/>
            <person name="Kondo S."/>
            <person name="Konno H."/>
            <person name="Nakano K."/>
            <person name="Ninomiya N."/>
            <person name="Nishio T."/>
            <person name="Okada M."/>
            <person name="Plessy C."/>
            <person name="Shibata K."/>
            <person name="Shiraki T."/>
            <person name="Suzuki S."/>
            <person name="Tagami M."/>
            <person name="Waki K."/>
            <person name="Watahiki A."/>
            <person name="Okamura-Oho Y."/>
            <person name="Suzuki H."/>
            <person name="Kawai J."/>
            <person name="Hayashizaki Y."/>
        </authorList>
    </citation>
    <scope>NUCLEOTIDE SEQUENCE [LARGE SCALE MRNA]</scope>
    <source>
        <strain>C57BL/6J</strain>
        <tissue>Inner ear</tissue>
    </source>
</reference>
<reference key="2">
    <citation type="journal article" date="2004" name="Genome Res.">
        <title>The status, quality, and expansion of the NIH full-length cDNA project: the Mammalian Gene Collection (MGC).</title>
        <authorList>
            <consortium name="The MGC Project Team"/>
        </authorList>
    </citation>
    <scope>NUCLEOTIDE SEQUENCE [LARGE SCALE MRNA] OF 140-348</scope>
    <source>
        <strain>FVB/N</strain>
        <tissue>Colon</tissue>
    </source>
</reference>